<gene>
    <name type="primary">ftsX</name>
    <name type="synonym">ftsS</name>
    <name type="ordered locus">b3462</name>
    <name type="ordered locus">JW3427</name>
</gene>
<comment type="function">
    <text evidence="3 4">Part of the ABC transporter FtsEX involved in cellular division. Important for assembly or stability of the septal ring. Encoded in an operon consisting of genes ftsY, ftsE and ftsX.</text>
</comment>
<comment type="subunit">
    <text>Forms a membrane-associated complex with FtsE.</text>
</comment>
<comment type="interaction">
    <interactant intactId="EBI-1119111">
        <id>P0AC30</id>
    </interactant>
    <interactant intactId="EBI-15948725">
        <id>P37690</id>
        <label>envC</label>
    </interactant>
    <organismsDiffer>false</organismsDiffer>
    <experiments>2</experiments>
</comment>
<comment type="subcellular location">
    <subcellularLocation>
        <location evidence="3 4 6">Cell inner membrane</location>
        <topology evidence="3 4 6">Multi-pass membrane protein</topology>
    </subcellularLocation>
    <text>Localizes to the septal ring at the later stages of cell growth and remains there until division is complete. This localization is dependent on localization of FtsZ, FtsA and ZipA, but not on the downstream division proteins FtsK, FtsQ or FtsI.</text>
</comment>
<comment type="disruption phenotype">
    <text evidence="5">Double deletion mutant FtsEX grows well on plates with LB medium with 1% NaCl forming healthy colonies at 30 degrees Celsius, whereas at 37 or 42 degrees Celsius, the colonies are very tiny and sick. In culture medium it exhibits mild elongation of cells at 30 degrees Celsius, and become very extensive at higher temperatures. This double mutant does not grow on LB culture medium without NaCl (LBON) at any temperature, possibly due to excessive lethal filamentation. Supplementation with any of a variety of osmolytes, such as glucose, sucrose, glycerol, or NaCl, completely rescues the growth on LBON medium. Though the growth is completely inhibited on LBON plates, the cultures grown in LBON broth show an initial increase in cell mass before the cessation of growth, and at this stage, the culture is extremely filamentous. The filaments grown in LB at 42 degrees Celsius or in LBON at 30 degrees Celsius are very long and appear to have elongated cells. They are normal and regularly spaced without any significant chromosomal aberrations or partition defects.</text>
</comment>
<comment type="miscellaneous">
    <text>Overexpression leads to strong inhibition of growth, cell filamentation and eventually cell death.</text>
</comment>
<comment type="similarity">
    <text evidence="7">Belongs to the ABC-4 integral membrane protein family. FtsX subfamily.</text>
</comment>
<evidence type="ECO:0000255" key="1"/>
<evidence type="ECO:0000256" key="2">
    <source>
        <dbReference type="SAM" id="MobiDB-lite"/>
    </source>
</evidence>
<evidence type="ECO:0000269" key="3">
    <source>
    </source>
</evidence>
<evidence type="ECO:0000269" key="4">
    <source>
    </source>
</evidence>
<evidence type="ECO:0000269" key="5">
    <source>
    </source>
</evidence>
<evidence type="ECO:0000269" key="6">
    <source>
    </source>
</evidence>
<evidence type="ECO:0000305" key="7"/>
<evidence type="ECO:0007829" key="8">
    <source>
        <dbReference type="PDB" id="6TPI"/>
    </source>
</evidence>
<evidence type="ECO:0007829" key="9">
    <source>
        <dbReference type="PDB" id="8X61"/>
    </source>
</evidence>
<evidence type="ECO:0007829" key="10">
    <source>
        <dbReference type="PDB" id="8Y3X"/>
    </source>
</evidence>
<proteinExistence type="evidence at protein level"/>
<name>FTSX_ECOLI</name>
<sequence>MNKRDAINHIRQFGGRLDRFRKSVGGSGDGGRNAPKRAKSSPKPVNRKTNVFNEQVRYAFHGALQDLKSKPFATFLTVMVIAISLTLPSVCYMVYKNVNQAATQYYPSPQITVYLQKTLDDDAAAGVVAQLQAEQGVEKVNYLSREDALGEFRNWSGFGGALDMLEENPLPAVAVVIPKLDFQGTESLNTLRDRITQINGIDEVRMDDSWFARLAALTGLVGRVSAMIGVLMVAAVFLVIGNSVRLSIFARRDSINVQKLIGATDGFILRPFLYGGALLGFSGALLSLILSEILVLRLSSAVAEVAQVFGTKFDINGLSFDECLLLLLVCSMIGWVAAWLATVQHLRHFTPE</sequence>
<dbReference type="EMBL" id="X04398">
    <property type="protein sequence ID" value="CAA27986.1"/>
    <property type="molecule type" value="Genomic_DNA"/>
</dbReference>
<dbReference type="EMBL" id="U00039">
    <property type="protein sequence ID" value="AAB18437.1"/>
    <property type="molecule type" value="Genomic_DNA"/>
</dbReference>
<dbReference type="EMBL" id="U00096">
    <property type="protein sequence ID" value="AAC76487.1"/>
    <property type="molecule type" value="Genomic_DNA"/>
</dbReference>
<dbReference type="EMBL" id="AP009048">
    <property type="protein sequence ID" value="BAE77831.1"/>
    <property type="molecule type" value="Genomic_DNA"/>
</dbReference>
<dbReference type="PIR" id="S03132">
    <property type="entry name" value="CEECFX"/>
</dbReference>
<dbReference type="RefSeq" id="NP_417919.1">
    <property type="nucleotide sequence ID" value="NC_000913.3"/>
</dbReference>
<dbReference type="RefSeq" id="WP_001042003.1">
    <property type="nucleotide sequence ID" value="NZ_STEB01000004.1"/>
</dbReference>
<dbReference type="PDB" id="6TPI">
    <property type="method" value="X-ray"/>
    <property type="resolution" value="2.10 A"/>
    <property type="chains" value="B/C=110-209"/>
</dbReference>
<dbReference type="PDB" id="8HD0">
    <property type="method" value="EM"/>
    <property type="resolution" value="3.11 A"/>
    <property type="chains" value="C/D=1-352"/>
</dbReference>
<dbReference type="PDB" id="8W6I">
    <property type="method" value="EM"/>
    <property type="resolution" value="3.70 A"/>
    <property type="chains" value="A/C=1-352"/>
</dbReference>
<dbReference type="PDB" id="8W6J">
    <property type="method" value="EM"/>
    <property type="resolution" value="3.40 A"/>
    <property type="chains" value="A/C=1-352"/>
</dbReference>
<dbReference type="PDB" id="8X61">
    <property type="method" value="EM"/>
    <property type="resolution" value="3.05 A"/>
    <property type="chains" value="C/D=1-352"/>
</dbReference>
<dbReference type="PDB" id="8Y3X">
    <property type="method" value="EM"/>
    <property type="resolution" value="3.11 A"/>
    <property type="chains" value="C/D=1-352"/>
</dbReference>
<dbReference type="PDB" id="8YMC">
    <property type="method" value="EM"/>
    <property type="resolution" value="2.70 A"/>
    <property type="chains" value="C/D=19-352"/>
</dbReference>
<dbReference type="PDBsum" id="6TPI"/>
<dbReference type="PDBsum" id="8HD0"/>
<dbReference type="PDBsum" id="8W6I"/>
<dbReference type="PDBsum" id="8W6J"/>
<dbReference type="PDBsum" id="8X61"/>
<dbReference type="PDBsum" id="8Y3X"/>
<dbReference type="PDBsum" id="8YMC"/>
<dbReference type="EMDB" id="EMD-34668"/>
<dbReference type="EMDB" id="EMD-37324"/>
<dbReference type="EMDB" id="EMD-37325"/>
<dbReference type="EMDB" id="EMD-38077"/>
<dbReference type="EMDB" id="EMD-38906"/>
<dbReference type="EMDB" id="EMD-39394"/>
<dbReference type="SMR" id="P0AC30"/>
<dbReference type="BioGRID" id="4262498">
    <property type="interactions" value="608"/>
</dbReference>
<dbReference type="ComplexPortal" id="CPX-4602">
    <property type="entry name" value="FtsEX ABC cell division complex"/>
</dbReference>
<dbReference type="DIP" id="DIP-35993N"/>
<dbReference type="FunCoup" id="P0AC30">
    <property type="interactions" value="339"/>
</dbReference>
<dbReference type="IntAct" id="P0AC30">
    <property type="interactions" value="7"/>
</dbReference>
<dbReference type="STRING" id="511145.b3462"/>
<dbReference type="ChEMBL" id="CHEMBL3309011"/>
<dbReference type="jPOST" id="P0AC30"/>
<dbReference type="PaxDb" id="511145-b3462"/>
<dbReference type="EnsemblBacteria" id="AAC76487">
    <property type="protein sequence ID" value="AAC76487"/>
    <property type="gene ID" value="b3462"/>
</dbReference>
<dbReference type="GeneID" id="93778529"/>
<dbReference type="GeneID" id="947969"/>
<dbReference type="KEGG" id="ecj:JW3427"/>
<dbReference type="KEGG" id="eco:b3462"/>
<dbReference type="KEGG" id="ecoc:C3026_18755"/>
<dbReference type="PATRIC" id="fig|511145.12.peg.3561"/>
<dbReference type="EchoBASE" id="EB0341"/>
<dbReference type="eggNOG" id="COG2177">
    <property type="taxonomic scope" value="Bacteria"/>
</dbReference>
<dbReference type="HOGENOM" id="CLU_073546_0_0_6"/>
<dbReference type="InParanoid" id="P0AC30"/>
<dbReference type="OMA" id="IKTMQMV"/>
<dbReference type="OrthoDB" id="9813411at2"/>
<dbReference type="PhylomeDB" id="P0AC30"/>
<dbReference type="BioCyc" id="EcoCyc:FTSX-MONOMER"/>
<dbReference type="PRO" id="PR:P0AC30"/>
<dbReference type="Proteomes" id="UP000000625">
    <property type="component" value="Chromosome"/>
</dbReference>
<dbReference type="GO" id="GO:1904949">
    <property type="term" value="C:ATPase complex"/>
    <property type="evidence" value="ECO:0000353"/>
    <property type="project" value="ComplexPortal"/>
</dbReference>
<dbReference type="GO" id="GO:0032153">
    <property type="term" value="C:cell division site"/>
    <property type="evidence" value="ECO:0000314"/>
    <property type="project" value="EcoliWiki"/>
</dbReference>
<dbReference type="GO" id="GO:0000935">
    <property type="term" value="C:division septum"/>
    <property type="evidence" value="ECO:0000314"/>
    <property type="project" value="ComplexPortal"/>
</dbReference>
<dbReference type="GO" id="GO:1990586">
    <property type="term" value="C:divisome complex"/>
    <property type="evidence" value="ECO:0000303"/>
    <property type="project" value="ComplexPortal"/>
</dbReference>
<dbReference type="GO" id="GO:0009276">
    <property type="term" value="C:Gram-negative-bacterium-type cell wall"/>
    <property type="evidence" value="ECO:0000314"/>
    <property type="project" value="UniProtKB"/>
</dbReference>
<dbReference type="GO" id="GO:0016020">
    <property type="term" value="C:membrane"/>
    <property type="evidence" value="ECO:0000318"/>
    <property type="project" value="GO_Central"/>
</dbReference>
<dbReference type="GO" id="GO:0005886">
    <property type="term" value="C:plasma membrane"/>
    <property type="evidence" value="ECO:0000314"/>
    <property type="project" value="ComplexPortal"/>
</dbReference>
<dbReference type="GO" id="GO:0098797">
    <property type="term" value="C:plasma membrane protein complex"/>
    <property type="evidence" value="ECO:0000353"/>
    <property type="project" value="ComplexPortal"/>
</dbReference>
<dbReference type="GO" id="GO:0051301">
    <property type="term" value="P:cell division"/>
    <property type="evidence" value="ECO:0000315"/>
    <property type="project" value="EcoliWiki"/>
</dbReference>
<dbReference type="GO" id="GO:0000917">
    <property type="term" value="P:division septum assembly"/>
    <property type="evidence" value="ECO:0000303"/>
    <property type="project" value="ComplexPortal"/>
</dbReference>
<dbReference type="GO" id="GO:0043093">
    <property type="term" value="P:FtsZ-dependent cytokinesis"/>
    <property type="evidence" value="ECO:0000303"/>
    <property type="project" value="ComplexPortal"/>
</dbReference>
<dbReference type="GO" id="GO:0009254">
    <property type="term" value="P:peptidoglycan turnover"/>
    <property type="evidence" value="ECO:0000303"/>
    <property type="project" value="ComplexPortal"/>
</dbReference>
<dbReference type="GO" id="GO:0051781">
    <property type="term" value="P:positive regulation of cell division"/>
    <property type="evidence" value="ECO:0000314"/>
    <property type="project" value="ComplexPortal"/>
</dbReference>
<dbReference type="FunFam" id="3.30.70.3040:FF:000001">
    <property type="entry name" value="Cell division protein FtsX"/>
    <property type="match status" value="1"/>
</dbReference>
<dbReference type="Gene3D" id="3.30.70.3040">
    <property type="match status" value="1"/>
</dbReference>
<dbReference type="InterPro" id="IPR003838">
    <property type="entry name" value="ABC3_permease_C"/>
</dbReference>
<dbReference type="InterPro" id="IPR004513">
    <property type="entry name" value="FtsX"/>
</dbReference>
<dbReference type="InterPro" id="IPR040690">
    <property type="entry name" value="FtsX_ECD"/>
</dbReference>
<dbReference type="InterPro" id="IPR047590">
    <property type="entry name" value="FtsX_proteobact"/>
</dbReference>
<dbReference type="NCBIfam" id="TIGR00439">
    <property type="entry name" value="FtsX_Gneg"/>
    <property type="match status" value="1"/>
</dbReference>
<dbReference type="PANTHER" id="PTHR47755">
    <property type="entry name" value="CELL DIVISION PROTEIN FTSX"/>
    <property type="match status" value="1"/>
</dbReference>
<dbReference type="PANTHER" id="PTHR47755:SF1">
    <property type="entry name" value="CELL DIVISION PROTEIN FTSX"/>
    <property type="match status" value="1"/>
</dbReference>
<dbReference type="Pfam" id="PF02687">
    <property type="entry name" value="FtsX"/>
    <property type="match status" value="1"/>
</dbReference>
<dbReference type="Pfam" id="PF18075">
    <property type="entry name" value="FtsX_ECD"/>
    <property type="match status" value="1"/>
</dbReference>
<dbReference type="PIRSF" id="PIRSF003097">
    <property type="entry name" value="FtsX"/>
    <property type="match status" value="1"/>
</dbReference>
<reference key="1">
    <citation type="journal article" date="1986" name="Mol. Gen. Genet.">
        <title>A new cell division operon in Escherichia coli.</title>
        <authorList>
            <person name="Gill D.R."/>
            <person name="Hatfull G.F."/>
            <person name="Salmond G.P.C."/>
        </authorList>
    </citation>
    <scope>NUCLEOTIDE SEQUENCE [GENOMIC DNA]</scope>
    <source>
        <strain>K12</strain>
    </source>
</reference>
<reference key="2">
    <citation type="journal article" date="1994" name="Nucleic Acids Res.">
        <title>Analysis of the Escherichia coli genome. V. DNA sequence of the region from 76.0 to 81.5 minutes.</title>
        <authorList>
            <person name="Sofia H.J."/>
            <person name="Burland V."/>
            <person name="Daniels D.L."/>
            <person name="Plunkett G. III"/>
            <person name="Blattner F.R."/>
        </authorList>
    </citation>
    <scope>NUCLEOTIDE SEQUENCE [LARGE SCALE GENOMIC DNA]</scope>
    <source>
        <strain>K12 / MG1655 / ATCC 47076</strain>
    </source>
</reference>
<reference key="3">
    <citation type="journal article" date="1997" name="Science">
        <title>The complete genome sequence of Escherichia coli K-12.</title>
        <authorList>
            <person name="Blattner F.R."/>
            <person name="Plunkett G. III"/>
            <person name="Bloch C.A."/>
            <person name="Perna N.T."/>
            <person name="Burland V."/>
            <person name="Riley M."/>
            <person name="Collado-Vides J."/>
            <person name="Glasner J.D."/>
            <person name="Rode C.K."/>
            <person name="Mayhew G.F."/>
            <person name="Gregor J."/>
            <person name="Davis N.W."/>
            <person name="Kirkpatrick H.A."/>
            <person name="Goeden M.A."/>
            <person name="Rose D.J."/>
            <person name="Mau B."/>
            <person name="Shao Y."/>
        </authorList>
    </citation>
    <scope>NUCLEOTIDE SEQUENCE [LARGE SCALE GENOMIC DNA]</scope>
    <source>
        <strain>K12 / MG1655 / ATCC 47076</strain>
    </source>
</reference>
<reference key="4">
    <citation type="journal article" date="2006" name="Mol. Syst. Biol.">
        <title>Highly accurate genome sequences of Escherichia coli K-12 strains MG1655 and W3110.</title>
        <authorList>
            <person name="Hayashi K."/>
            <person name="Morooka N."/>
            <person name="Yamamoto Y."/>
            <person name="Fujita K."/>
            <person name="Isono K."/>
            <person name="Choi S."/>
            <person name="Ohtsubo E."/>
            <person name="Baba T."/>
            <person name="Wanner B.L."/>
            <person name="Mori H."/>
            <person name="Horiuchi T."/>
        </authorList>
    </citation>
    <scope>NUCLEOTIDE SEQUENCE [LARGE SCALE GENOMIC DNA]</scope>
    <source>
        <strain>K12 / W3110 / ATCC 27325 / DSM 5911</strain>
    </source>
</reference>
<reference key="5">
    <citation type="journal article" date="1984" name="Mol. Gen. Genet.">
        <title>Genetic analysis of essential genes in the ftsE region of the Escherichia coli genetic map and identification of a new cell division gene, ftsS.</title>
        <authorList>
            <person name="Salmond G.P."/>
            <person name="Plakidou S."/>
        </authorList>
    </citation>
    <scope>GENE NAME</scope>
</reference>
<reference key="6">
    <citation type="journal article" date="1987" name="Mol. Gen. Genet.">
        <title>The Escherichia coli cell division proteins FtsY, FtsE and FtsX are inner membrane-associated.</title>
        <authorList>
            <person name="Gill D.R."/>
            <person name="Salmond G.P."/>
        </authorList>
    </citation>
    <scope>SUBCELLULAR LOCATION</scope>
    <scope>OPERON STRUCTURE</scope>
</reference>
<reference key="7">
    <citation type="journal article" date="1999" name="Mol. Microbiol.">
        <title>Molecular characterization of Escherichia coli FtsE and FtsX.</title>
        <authorList>
            <person name="de Leeuw E."/>
            <person name="Graham B."/>
            <person name="Phillips G.J."/>
            <person name="ten Hagen-Jongman C.M."/>
            <person name="Oudega B."/>
            <person name="Luirink J."/>
        </authorList>
    </citation>
    <scope>FUNCTION</scope>
    <scope>INTERACTION WITH FTSE</scope>
    <scope>SUBCELLULAR LOCATION</scope>
    <scope>OVEREXPRESSION</scope>
</reference>
<reference key="8">
    <citation type="journal article" date="2004" name="J. Bacteriol.">
        <title>A predicted ABC transporter, FtsEX, is needed for cell division in Escherichia coli.</title>
        <authorList>
            <person name="Schmidt K.L."/>
            <person name="Peterson N.D."/>
            <person name="Kustusch R.J."/>
            <person name="Wissel M.C."/>
            <person name="Graham B."/>
            <person name="Phillips G.J."/>
            <person name="Weiss D.S."/>
        </authorList>
    </citation>
    <scope>FUNCTION</scope>
    <scope>SUBCELLULAR LOCATION</scope>
    <source>
        <strain>K12 / MG1655 / ATCC 47076</strain>
    </source>
</reference>
<reference key="9">
    <citation type="journal article" date="2005" name="Science">
        <title>Global topology analysis of the Escherichia coli inner membrane proteome.</title>
        <authorList>
            <person name="Daley D.O."/>
            <person name="Rapp M."/>
            <person name="Granseth E."/>
            <person name="Melen K."/>
            <person name="Drew D."/>
            <person name="von Heijne G."/>
        </authorList>
    </citation>
    <scope>TOPOLOGY [LARGE SCALE ANALYSIS]</scope>
    <source>
        <strain>K12 / MG1655 / ATCC 47076</strain>
    </source>
</reference>
<reference key="10">
    <citation type="journal article" date="2007" name="J. Bacteriol.">
        <title>Role of FtsEX in cell division of Escherichia coli: viability of ftsEX mutants is dependent on functional SufI or high osmotic strength.</title>
        <authorList>
            <person name="Reddy M."/>
        </authorList>
    </citation>
    <scope>DISRUPTION PHENOTYPE</scope>
    <source>
        <strain>K12</strain>
    </source>
</reference>
<protein>
    <recommendedName>
        <fullName>Cell division protein FtsX</fullName>
    </recommendedName>
</protein>
<organism>
    <name type="scientific">Escherichia coli (strain K12)</name>
    <dbReference type="NCBI Taxonomy" id="83333"/>
    <lineage>
        <taxon>Bacteria</taxon>
        <taxon>Pseudomonadati</taxon>
        <taxon>Pseudomonadota</taxon>
        <taxon>Gammaproteobacteria</taxon>
        <taxon>Enterobacterales</taxon>
        <taxon>Enterobacteriaceae</taxon>
        <taxon>Escherichia</taxon>
    </lineage>
</organism>
<keyword id="KW-0002">3D-structure</keyword>
<keyword id="KW-0131">Cell cycle</keyword>
<keyword id="KW-0132">Cell division</keyword>
<keyword id="KW-0997">Cell inner membrane</keyword>
<keyword id="KW-1003">Cell membrane</keyword>
<keyword id="KW-0472">Membrane</keyword>
<keyword id="KW-1185">Reference proteome</keyword>
<keyword id="KW-0812">Transmembrane</keyword>
<keyword id="KW-1133">Transmembrane helix</keyword>
<accession>P0AC30</accession>
<accession>P10122</accession>
<accession>Q2M7C5</accession>
<feature type="chain" id="PRO_0000166792" description="Cell division protein FtsX">
    <location>
        <begin position="1"/>
        <end position="352"/>
    </location>
</feature>
<feature type="topological domain" description="Cytoplasmic" evidence="1">
    <location>
        <begin position="1"/>
        <end position="74"/>
    </location>
</feature>
<feature type="transmembrane region" description="Helical" evidence="1">
    <location>
        <begin position="75"/>
        <end position="95"/>
    </location>
</feature>
<feature type="topological domain" description="Periplasmic" evidence="1">
    <location>
        <begin position="96"/>
        <end position="223"/>
    </location>
</feature>
<feature type="transmembrane region" description="Helical" evidence="1">
    <location>
        <begin position="224"/>
        <end position="244"/>
    </location>
</feature>
<feature type="topological domain" description="Cytoplasmic" evidence="1">
    <location>
        <begin position="245"/>
        <end position="275"/>
    </location>
</feature>
<feature type="transmembrane region" description="Helical" evidence="1">
    <location>
        <begin position="276"/>
        <end position="296"/>
    </location>
</feature>
<feature type="topological domain" description="Periplasmic" evidence="1">
    <location>
        <begin position="297"/>
        <end position="322"/>
    </location>
</feature>
<feature type="transmembrane region" description="Helical" evidence="1">
    <location>
        <begin position="323"/>
        <end position="343"/>
    </location>
</feature>
<feature type="topological domain" description="Cytoplasmic" evidence="1">
    <location>
        <begin position="344"/>
        <end position="352"/>
    </location>
</feature>
<feature type="region of interest" description="Disordered" evidence="2">
    <location>
        <begin position="19"/>
        <end position="48"/>
    </location>
</feature>
<feature type="helix" evidence="9">
    <location>
        <begin position="54"/>
        <end position="69"/>
    </location>
</feature>
<feature type="helix" evidence="9">
    <location>
        <begin position="71"/>
        <end position="98"/>
    </location>
</feature>
<feature type="strand" evidence="8">
    <location>
        <begin position="111"/>
        <end position="115"/>
    </location>
</feature>
<feature type="helix" evidence="8">
    <location>
        <begin position="121"/>
        <end position="132"/>
    </location>
</feature>
<feature type="strand" evidence="10">
    <location>
        <begin position="133"/>
        <end position="136"/>
    </location>
</feature>
<feature type="strand" evidence="8">
    <location>
        <begin position="137"/>
        <end position="143"/>
    </location>
</feature>
<feature type="helix" evidence="8">
    <location>
        <begin position="145"/>
        <end position="153"/>
    </location>
</feature>
<feature type="strand" evidence="10">
    <location>
        <begin position="155"/>
        <end position="157"/>
    </location>
</feature>
<feature type="turn" evidence="8">
    <location>
        <begin position="159"/>
        <end position="161"/>
    </location>
</feature>
<feature type="helix" evidence="8">
    <location>
        <begin position="162"/>
        <end position="164"/>
    </location>
</feature>
<feature type="strand" evidence="10">
    <location>
        <begin position="165"/>
        <end position="167"/>
    </location>
</feature>
<feature type="strand" evidence="8">
    <location>
        <begin position="173"/>
        <end position="178"/>
    </location>
</feature>
<feature type="helix" evidence="8">
    <location>
        <begin position="180"/>
        <end position="182"/>
    </location>
</feature>
<feature type="helix" evidence="8">
    <location>
        <begin position="185"/>
        <end position="196"/>
    </location>
</feature>
<feature type="strand" evidence="10">
    <location>
        <begin position="197"/>
        <end position="199"/>
    </location>
</feature>
<feature type="strand" evidence="8">
    <location>
        <begin position="201"/>
        <end position="205"/>
    </location>
</feature>
<feature type="helix" evidence="10">
    <location>
        <begin position="212"/>
        <end position="214"/>
    </location>
</feature>
<feature type="turn" evidence="10">
    <location>
        <begin position="215"/>
        <end position="219"/>
    </location>
</feature>
<feature type="turn" evidence="9">
    <location>
        <begin position="223"/>
        <end position="225"/>
    </location>
</feature>
<feature type="helix" evidence="9">
    <location>
        <begin position="226"/>
        <end position="250"/>
    </location>
</feature>
<feature type="helix" evidence="9">
    <location>
        <begin position="252"/>
        <end position="261"/>
    </location>
</feature>
<feature type="helix" evidence="9">
    <location>
        <begin position="265"/>
        <end position="297"/>
    </location>
</feature>
<feature type="helix" evidence="9">
    <location>
        <begin position="320"/>
        <end position="346"/>
    </location>
</feature>